<sequence>MPIKIPDDLPATSVLEAEGVMVMREADAVRQDIRPLRIGLLNLMPNKVTTETQIARLLGATPLQVELTLVRMTNHVARHTPADHMLSFYCPWEEVNDQRFDGFVITGAPVERLPFEEVTYWDEMRRVFDWTQSHVHRTLNICWAAQAAVYHFHGMKKYDLPAKASGVFRQRSLVPASPYLRGFSDDFAIPVSRWTEVRKSDIPADSGLKVLVDSTETGLCLLDDPRHRSLHMFNHVEYDTTSLADEYFRDIQVQPEAKVPVNYFPGDDAKRPPENRWRSHAHLLFGNWINEMYQSTPYDIERIGKV</sequence>
<proteinExistence type="inferred from homology"/>
<name>METAA_BRUA2</name>
<feature type="chain" id="PRO_1000021803" description="Homoserine O-acetyltransferase">
    <location>
        <begin position="1"/>
        <end position="306"/>
    </location>
</feature>
<feature type="active site" description="Acyl-thioester intermediate" evidence="1">
    <location>
        <position position="142"/>
    </location>
</feature>
<feature type="active site" description="Proton acceptor" evidence="1">
    <location>
        <position position="235"/>
    </location>
</feature>
<feature type="active site" evidence="1">
    <location>
        <position position="237"/>
    </location>
</feature>
<feature type="binding site" evidence="1">
    <location>
        <position position="163"/>
    </location>
    <ligand>
        <name>substrate</name>
    </ligand>
</feature>
<feature type="binding site" evidence="1">
    <location>
        <position position="192"/>
    </location>
    <ligand>
        <name>substrate</name>
    </ligand>
</feature>
<feature type="binding site" evidence="1">
    <location>
        <position position="249"/>
    </location>
    <ligand>
        <name>substrate</name>
    </ligand>
</feature>
<feature type="site" description="Important for acyl-CoA specificity" evidence="1">
    <location>
        <position position="111"/>
    </location>
</feature>
<feature type="site" description="Important for substrate specificity" evidence="1">
    <location>
        <position position="192"/>
    </location>
</feature>
<reference key="1">
    <citation type="journal article" date="2005" name="Infect. Immun.">
        <title>Whole-genome analyses of speciation events in pathogenic Brucellae.</title>
        <authorList>
            <person name="Chain P.S."/>
            <person name="Comerci D.J."/>
            <person name="Tolmasky M.E."/>
            <person name="Larimer F.W."/>
            <person name="Malfatti S.A."/>
            <person name="Vergez L.M."/>
            <person name="Aguero F."/>
            <person name="Land M.L."/>
            <person name="Ugalde R.A."/>
            <person name="Garcia E."/>
        </authorList>
    </citation>
    <scope>NUCLEOTIDE SEQUENCE [LARGE SCALE GENOMIC DNA]</scope>
    <source>
        <strain>2308</strain>
    </source>
</reference>
<organism>
    <name type="scientific">Brucella abortus (strain 2308)</name>
    <dbReference type="NCBI Taxonomy" id="359391"/>
    <lineage>
        <taxon>Bacteria</taxon>
        <taxon>Pseudomonadati</taxon>
        <taxon>Pseudomonadota</taxon>
        <taxon>Alphaproteobacteria</taxon>
        <taxon>Hyphomicrobiales</taxon>
        <taxon>Brucellaceae</taxon>
        <taxon>Brucella/Ochrobactrum group</taxon>
        <taxon>Brucella</taxon>
    </lineage>
</organism>
<comment type="function">
    <text evidence="1">Transfers an acetyl group from acetyl-CoA to L-homoserine, forming acetyl-L-homoserine.</text>
</comment>
<comment type="catalytic activity">
    <reaction evidence="1">
        <text>L-homoserine + acetyl-CoA = O-acetyl-L-homoserine + CoA</text>
        <dbReference type="Rhea" id="RHEA:13701"/>
        <dbReference type="ChEBI" id="CHEBI:57287"/>
        <dbReference type="ChEBI" id="CHEBI:57288"/>
        <dbReference type="ChEBI" id="CHEBI:57476"/>
        <dbReference type="ChEBI" id="CHEBI:57716"/>
        <dbReference type="EC" id="2.3.1.31"/>
    </reaction>
</comment>
<comment type="pathway">
    <text evidence="1">Amino-acid biosynthesis; L-methionine biosynthesis via de novo pathway; O-acetyl-L-homoserine from L-homoserine: step 1/1.</text>
</comment>
<comment type="subcellular location">
    <subcellularLocation>
        <location evidence="1">Cytoplasm</location>
    </subcellularLocation>
</comment>
<comment type="similarity">
    <text evidence="1">Belongs to the MetA family.</text>
</comment>
<evidence type="ECO:0000255" key="1">
    <source>
        <dbReference type="HAMAP-Rule" id="MF_00295"/>
    </source>
</evidence>
<protein>
    <recommendedName>
        <fullName evidence="1">Homoserine O-acetyltransferase</fullName>
        <shortName evidence="1">HAT</shortName>
        <ecNumber evidence="1">2.3.1.31</ecNumber>
    </recommendedName>
    <alternativeName>
        <fullName evidence="1">Homoserine transacetylase</fullName>
        <shortName evidence="1">HTA</shortName>
    </alternativeName>
</protein>
<accession>Q2YKB2</accession>
<dbReference type="EC" id="2.3.1.31" evidence="1"/>
<dbReference type="EMBL" id="AM040265">
    <property type="protein sequence ID" value="CAJ12917.1"/>
    <property type="molecule type" value="Genomic_DNA"/>
</dbReference>
<dbReference type="SMR" id="Q2YKB2"/>
<dbReference type="STRING" id="359391.BAB2_0751"/>
<dbReference type="KEGG" id="bmf:BAB2_0751"/>
<dbReference type="PATRIC" id="fig|359391.11.peg.443"/>
<dbReference type="HOGENOM" id="CLU_057851_0_1_5"/>
<dbReference type="PhylomeDB" id="Q2YKB2"/>
<dbReference type="UniPathway" id="UPA00051">
    <property type="reaction ID" value="UER00074"/>
</dbReference>
<dbReference type="Proteomes" id="UP000002719">
    <property type="component" value="Chromosome II"/>
</dbReference>
<dbReference type="GO" id="GO:0005737">
    <property type="term" value="C:cytoplasm"/>
    <property type="evidence" value="ECO:0007669"/>
    <property type="project" value="UniProtKB-SubCell"/>
</dbReference>
<dbReference type="GO" id="GO:0004414">
    <property type="term" value="F:homoserine O-acetyltransferase activity"/>
    <property type="evidence" value="ECO:0007669"/>
    <property type="project" value="UniProtKB-EC"/>
</dbReference>
<dbReference type="GO" id="GO:0008899">
    <property type="term" value="F:homoserine O-succinyltransferase activity"/>
    <property type="evidence" value="ECO:0007669"/>
    <property type="project" value="UniProtKB-UniRule"/>
</dbReference>
<dbReference type="GO" id="GO:0019281">
    <property type="term" value="P:L-methionine biosynthetic process from homoserine via O-succinyl-L-homoserine and cystathionine"/>
    <property type="evidence" value="ECO:0007669"/>
    <property type="project" value="InterPro"/>
</dbReference>
<dbReference type="CDD" id="cd03131">
    <property type="entry name" value="GATase1_HTS"/>
    <property type="match status" value="1"/>
</dbReference>
<dbReference type="Gene3D" id="3.40.50.880">
    <property type="match status" value="1"/>
</dbReference>
<dbReference type="HAMAP" id="MF_00295">
    <property type="entry name" value="MetA_acyltransf"/>
    <property type="match status" value="1"/>
</dbReference>
<dbReference type="InterPro" id="IPR029062">
    <property type="entry name" value="Class_I_gatase-like"/>
</dbReference>
<dbReference type="InterPro" id="IPR005697">
    <property type="entry name" value="HST_MetA"/>
</dbReference>
<dbReference type="InterPro" id="IPR033752">
    <property type="entry name" value="MetA_family"/>
</dbReference>
<dbReference type="NCBIfam" id="TIGR01001">
    <property type="entry name" value="metA"/>
    <property type="match status" value="1"/>
</dbReference>
<dbReference type="PANTHER" id="PTHR20919">
    <property type="entry name" value="HOMOSERINE O-SUCCINYLTRANSFERASE"/>
    <property type="match status" value="1"/>
</dbReference>
<dbReference type="PANTHER" id="PTHR20919:SF0">
    <property type="entry name" value="HOMOSERINE O-SUCCINYLTRANSFERASE"/>
    <property type="match status" value="1"/>
</dbReference>
<dbReference type="Pfam" id="PF04204">
    <property type="entry name" value="HTS"/>
    <property type="match status" value="1"/>
</dbReference>
<dbReference type="PIRSF" id="PIRSF000450">
    <property type="entry name" value="H_ser_succinyltr"/>
    <property type="match status" value="1"/>
</dbReference>
<dbReference type="SUPFAM" id="SSF52317">
    <property type="entry name" value="Class I glutamine amidotransferase-like"/>
    <property type="match status" value="1"/>
</dbReference>
<gene>
    <name evidence="1" type="primary">metAA</name>
    <name type="ordered locus">BAB2_0751</name>
</gene>
<keyword id="KW-0012">Acyltransferase</keyword>
<keyword id="KW-0028">Amino-acid biosynthesis</keyword>
<keyword id="KW-0963">Cytoplasm</keyword>
<keyword id="KW-0486">Methionine biosynthesis</keyword>
<keyword id="KW-1185">Reference proteome</keyword>
<keyword id="KW-0808">Transferase</keyword>